<protein>
    <recommendedName>
        <fullName>Histone acetyltransferase type B subunit 2</fullName>
    </recommendedName>
</protein>
<organism>
    <name type="scientific">Aspergillus oryzae (strain ATCC 42149 / RIB 40)</name>
    <name type="common">Yellow koji mold</name>
    <dbReference type="NCBI Taxonomy" id="510516"/>
    <lineage>
        <taxon>Eukaryota</taxon>
        <taxon>Fungi</taxon>
        <taxon>Dikarya</taxon>
        <taxon>Ascomycota</taxon>
        <taxon>Pezizomycotina</taxon>
        <taxon>Eurotiomycetes</taxon>
        <taxon>Eurotiomycetidae</taxon>
        <taxon>Eurotiales</taxon>
        <taxon>Aspergillaceae</taxon>
        <taxon>Aspergillus</taxon>
        <taxon>Aspergillus subgen. Circumdati</taxon>
    </lineage>
</organism>
<sequence>MEPYDDGFIEEQEEQEEERTEEKVINEEYKTWKKNAPFLYDMILSTALEWPTLTTQWLPDKQEVPDKPYSTHRLLLGTHTSSDAQNYLQIAHVQLPNPSAPNPDDYDEERGEIGGYGGSSKKAPMEIKFNIVQKIDHKGEVNKARYQPQNPNVIATMCTDGRVMIWDRSKHPSLPTGTVNPQMELLGHTKEGFGLSWSPHTAGHLVTGSEDKTVRLWDLTTYTKGNKALKPSRTYTHHSSIVNDVQYHPLHSSLIGTVSDDITLQILDIREAETTRAAASAEGQHRDAINAIAFNPAAETVLATGSADKSIGLWDLRNLKTKLHTLECHTDSVTSLSWHPFEESVLASASYDRKIMFWDLSRSGEEQTPDDAQDGPPELLFMHGGHTNRISDFSWNLNDPWVLCSAAEDNLLQVWKVADAIVGKDLEDVPTEELEA</sequence>
<proteinExistence type="inferred from homology"/>
<name>HAT2_ASPOR</name>
<dbReference type="EMBL" id="BA000052">
    <property type="protein sequence ID" value="BAE61544.1"/>
    <property type="molecule type" value="Genomic_DNA"/>
</dbReference>
<dbReference type="RefSeq" id="XP_001822677.1">
    <property type="nucleotide sequence ID" value="XM_001822625.2"/>
</dbReference>
<dbReference type="SMR" id="Q2UA71"/>
<dbReference type="STRING" id="510516.Q2UA71"/>
<dbReference type="EnsemblFungi" id="BAE61544">
    <property type="protein sequence ID" value="BAE61544"/>
    <property type="gene ID" value="AO090102000516"/>
</dbReference>
<dbReference type="GeneID" id="5994722"/>
<dbReference type="KEGG" id="aor:AO090102000516"/>
<dbReference type="VEuPathDB" id="FungiDB:AO090102000516"/>
<dbReference type="HOGENOM" id="CLU_020445_3_1_1"/>
<dbReference type="OMA" id="PHEEGCL"/>
<dbReference type="OrthoDB" id="41489at5052"/>
<dbReference type="Proteomes" id="UP000006564">
    <property type="component" value="Chromosome 4"/>
</dbReference>
<dbReference type="GO" id="GO:0005737">
    <property type="term" value="C:cytoplasm"/>
    <property type="evidence" value="ECO:0007669"/>
    <property type="project" value="UniProtKB-SubCell"/>
</dbReference>
<dbReference type="GO" id="GO:0005634">
    <property type="term" value="C:nucleus"/>
    <property type="evidence" value="ECO:0007669"/>
    <property type="project" value="UniProtKB-SubCell"/>
</dbReference>
<dbReference type="GO" id="GO:0006325">
    <property type="term" value="P:chromatin organization"/>
    <property type="evidence" value="ECO:0007669"/>
    <property type="project" value="UniProtKB-KW"/>
</dbReference>
<dbReference type="CDD" id="cd00200">
    <property type="entry name" value="WD40"/>
    <property type="match status" value="1"/>
</dbReference>
<dbReference type="FunFam" id="2.130.10.10:FF:000313">
    <property type="entry name" value="Chromatin assembly factor 1 subunit C"/>
    <property type="match status" value="1"/>
</dbReference>
<dbReference type="Gene3D" id="2.130.10.10">
    <property type="entry name" value="YVTN repeat-like/Quinoprotein amine dehydrogenase"/>
    <property type="match status" value="1"/>
</dbReference>
<dbReference type="InterPro" id="IPR020472">
    <property type="entry name" value="G-protein_beta_WD-40_rep"/>
</dbReference>
<dbReference type="InterPro" id="IPR022052">
    <property type="entry name" value="Histone-bd_RBBP4-like_N"/>
</dbReference>
<dbReference type="InterPro" id="IPR015943">
    <property type="entry name" value="WD40/YVTN_repeat-like_dom_sf"/>
</dbReference>
<dbReference type="InterPro" id="IPR019775">
    <property type="entry name" value="WD40_repeat_CS"/>
</dbReference>
<dbReference type="InterPro" id="IPR036322">
    <property type="entry name" value="WD40_repeat_dom_sf"/>
</dbReference>
<dbReference type="InterPro" id="IPR001680">
    <property type="entry name" value="WD40_rpt"/>
</dbReference>
<dbReference type="InterPro" id="IPR050459">
    <property type="entry name" value="WD_repeat_RBAP46/RBAP48/MSI1"/>
</dbReference>
<dbReference type="PANTHER" id="PTHR22850">
    <property type="entry name" value="WD40 REPEAT FAMILY"/>
    <property type="match status" value="1"/>
</dbReference>
<dbReference type="Pfam" id="PF12265">
    <property type="entry name" value="CAF1C_H4-bd"/>
    <property type="match status" value="1"/>
</dbReference>
<dbReference type="Pfam" id="PF00400">
    <property type="entry name" value="WD40"/>
    <property type="match status" value="6"/>
</dbReference>
<dbReference type="PRINTS" id="PR00320">
    <property type="entry name" value="GPROTEINBRPT"/>
</dbReference>
<dbReference type="SMART" id="SM00320">
    <property type="entry name" value="WD40"/>
    <property type="match status" value="6"/>
</dbReference>
<dbReference type="SUPFAM" id="SSF50978">
    <property type="entry name" value="WD40 repeat-like"/>
    <property type="match status" value="1"/>
</dbReference>
<dbReference type="PROSITE" id="PS00678">
    <property type="entry name" value="WD_REPEATS_1"/>
    <property type="match status" value="3"/>
</dbReference>
<dbReference type="PROSITE" id="PS50082">
    <property type="entry name" value="WD_REPEATS_2"/>
    <property type="match status" value="5"/>
</dbReference>
<dbReference type="PROSITE" id="PS50294">
    <property type="entry name" value="WD_REPEATS_REGION"/>
    <property type="match status" value="1"/>
</dbReference>
<gene>
    <name type="primary">hat2</name>
    <name type="ORF">AO090102000516</name>
</gene>
<feature type="chain" id="PRO_0000227734" description="Histone acetyltransferase type B subunit 2">
    <location>
        <begin position="1"/>
        <end position="436"/>
    </location>
</feature>
<feature type="repeat" description="WD 1">
    <location>
        <begin position="136"/>
        <end position="176"/>
    </location>
</feature>
<feature type="repeat" description="WD 2">
    <location>
        <begin position="187"/>
        <end position="227"/>
    </location>
</feature>
<feature type="repeat" description="WD 3">
    <location>
        <begin position="237"/>
        <end position="277"/>
    </location>
</feature>
<feature type="repeat" description="WD 4">
    <location>
        <begin position="284"/>
        <end position="324"/>
    </location>
</feature>
<feature type="repeat" description="WD 5">
    <location>
        <begin position="328"/>
        <end position="368"/>
    </location>
</feature>
<feature type="repeat" description="WD 6">
    <location>
        <begin position="385"/>
        <end position="425"/>
    </location>
</feature>
<feature type="region of interest" description="Disordered" evidence="3">
    <location>
        <begin position="1"/>
        <end position="22"/>
    </location>
</feature>
<feature type="region of interest" description="Interaction with the histone H4 N-terminus" evidence="2">
    <location>
        <begin position="370"/>
        <end position="374"/>
    </location>
</feature>
<feature type="compositionally biased region" description="Acidic residues" evidence="3">
    <location>
        <begin position="1"/>
        <end position="19"/>
    </location>
</feature>
<keyword id="KW-0156">Chromatin regulator</keyword>
<keyword id="KW-0963">Cytoplasm</keyword>
<keyword id="KW-0539">Nucleus</keyword>
<keyword id="KW-1185">Reference proteome</keyword>
<keyword id="KW-0677">Repeat</keyword>
<keyword id="KW-0853">WD repeat</keyword>
<comment type="function">
    <text evidence="2">Regulatory subunit of the histone acetylase B (HAT-B) complex. The complex acetylates 'Lys-12' of histone H4 which is required for telomeric silencing.</text>
</comment>
<comment type="subunit">
    <text evidence="2">Component of the HAT-B complex composed of at least hat1 and hat2. The HAT-B complex binds to histone H4 tail.</text>
</comment>
<comment type="subcellular location">
    <subcellularLocation>
        <location evidence="1">Cytoplasm</location>
    </subcellularLocation>
    <subcellularLocation>
        <location evidence="1">Nucleus</location>
    </subcellularLocation>
</comment>
<comment type="similarity">
    <text evidence="4">Belongs to the WD repeat RBAP46/RBAP48/MSI1 family.</text>
</comment>
<accession>Q2UA71</accession>
<evidence type="ECO:0000250" key="1"/>
<evidence type="ECO:0000250" key="2">
    <source>
        <dbReference type="UniProtKB" id="P39984"/>
    </source>
</evidence>
<evidence type="ECO:0000256" key="3">
    <source>
        <dbReference type="SAM" id="MobiDB-lite"/>
    </source>
</evidence>
<evidence type="ECO:0000305" key="4"/>
<reference key="1">
    <citation type="journal article" date="2005" name="Nature">
        <title>Genome sequencing and analysis of Aspergillus oryzae.</title>
        <authorList>
            <person name="Machida M."/>
            <person name="Asai K."/>
            <person name="Sano M."/>
            <person name="Tanaka T."/>
            <person name="Kumagai T."/>
            <person name="Terai G."/>
            <person name="Kusumoto K."/>
            <person name="Arima T."/>
            <person name="Akita O."/>
            <person name="Kashiwagi Y."/>
            <person name="Abe K."/>
            <person name="Gomi K."/>
            <person name="Horiuchi H."/>
            <person name="Kitamoto K."/>
            <person name="Kobayashi T."/>
            <person name="Takeuchi M."/>
            <person name="Denning D.W."/>
            <person name="Galagan J.E."/>
            <person name="Nierman W.C."/>
            <person name="Yu J."/>
            <person name="Archer D.B."/>
            <person name="Bennett J.W."/>
            <person name="Bhatnagar D."/>
            <person name="Cleveland T.E."/>
            <person name="Fedorova N.D."/>
            <person name="Gotoh O."/>
            <person name="Horikawa H."/>
            <person name="Hosoyama A."/>
            <person name="Ichinomiya M."/>
            <person name="Igarashi R."/>
            <person name="Iwashita K."/>
            <person name="Juvvadi P.R."/>
            <person name="Kato M."/>
            <person name="Kato Y."/>
            <person name="Kin T."/>
            <person name="Kokubun A."/>
            <person name="Maeda H."/>
            <person name="Maeyama N."/>
            <person name="Maruyama J."/>
            <person name="Nagasaki H."/>
            <person name="Nakajima T."/>
            <person name="Oda K."/>
            <person name="Okada K."/>
            <person name="Paulsen I."/>
            <person name="Sakamoto K."/>
            <person name="Sawano T."/>
            <person name="Takahashi M."/>
            <person name="Takase K."/>
            <person name="Terabayashi Y."/>
            <person name="Wortman J.R."/>
            <person name="Yamada O."/>
            <person name="Yamagata Y."/>
            <person name="Anazawa H."/>
            <person name="Hata Y."/>
            <person name="Koide Y."/>
            <person name="Komori T."/>
            <person name="Koyama Y."/>
            <person name="Minetoki T."/>
            <person name="Suharnan S."/>
            <person name="Tanaka A."/>
            <person name="Isono K."/>
            <person name="Kuhara S."/>
            <person name="Ogasawara N."/>
            <person name="Kikuchi H."/>
        </authorList>
    </citation>
    <scope>NUCLEOTIDE SEQUENCE [LARGE SCALE GENOMIC DNA]</scope>
    <source>
        <strain>ATCC 42149 / RIB 40</strain>
    </source>
</reference>